<reference key="1">
    <citation type="journal article" date="2005" name="J. Mol. Evol.">
        <title>PAQR proteins: a novel membrane receptor family defined by an ancient 7-transmembrane pass motif.</title>
        <authorList>
            <person name="Tang Y.T."/>
            <person name="Hu T."/>
            <person name="Arterburn M."/>
            <person name="Boyle B."/>
            <person name="Bright J.M."/>
            <person name="Emtage P.C."/>
            <person name="Funk W.D."/>
        </authorList>
    </citation>
    <scope>NUCLEOTIDE SEQUENCE [MRNA] (ISOFORM 2)</scope>
    <scope>TISSUE SPECIFICITY</scope>
</reference>
<reference key="2">
    <citation type="journal article" date="2003" name="Nature">
        <title>The DNA sequence of human chromosome 7.</title>
        <authorList>
            <person name="Hillier L.W."/>
            <person name="Fulton R.S."/>
            <person name="Fulton L.A."/>
            <person name="Graves T.A."/>
            <person name="Pepin K.H."/>
            <person name="Wagner-McPherson C."/>
            <person name="Layman D."/>
            <person name="Maas J."/>
            <person name="Jaeger S."/>
            <person name="Walker R."/>
            <person name="Wylie K."/>
            <person name="Sekhon M."/>
            <person name="Becker M.C."/>
            <person name="O'Laughlin M.D."/>
            <person name="Schaller M.E."/>
            <person name="Fewell G.A."/>
            <person name="Delehaunty K.D."/>
            <person name="Miner T.L."/>
            <person name="Nash W.E."/>
            <person name="Cordes M."/>
            <person name="Du H."/>
            <person name="Sun H."/>
            <person name="Edwards J."/>
            <person name="Bradshaw-Cordum H."/>
            <person name="Ali J."/>
            <person name="Andrews S."/>
            <person name="Isak A."/>
            <person name="Vanbrunt A."/>
            <person name="Nguyen C."/>
            <person name="Du F."/>
            <person name="Lamar B."/>
            <person name="Courtney L."/>
            <person name="Kalicki J."/>
            <person name="Ozersky P."/>
            <person name="Bielicki L."/>
            <person name="Scott K."/>
            <person name="Holmes A."/>
            <person name="Harkins R."/>
            <person name="Harris A."/>
            <person name="Strong C.M."/>
            <person name="Hou S."/>
            <person name="Tomlinson C."/>
            <person name="Dauphin-Kohlberg S."/>
            <person name="Kozlowicz-Reilly A."/>
            <person name="Leonard S."/>
            <person name="Rohlfing T."/>
            <person name="Rock S.M."/>
            <person name="Tin-Wollam A.-M."/>
            <person name="Abbott A."/>
            <person name="Minx P."/>
            <person name="Maupin R."/>
            <person name="Strowmatt C."/>
            <person name="Latreille P."/>
            <person name="Miller N."/>
            <person name="Johnson D."/>
            <person name="Murray J."/>
            <person name="Woessner J.P."/>
            <person name="Wendl M.C."/>
            <person name="Yang S.-P."/>
            <person name="Schultz B.R."/>
            <person name="Wallis J.W."/>
            <person name="Spieth J."/>
            <person name="Bieri T.A."/>
            <person name="Nelson J.O."/>
            <person name="Berkowicz N."/>
            <person name="Wohldmann P.E."/>
            <person name="Cook L.L."/>
            <person name="Hickenbotham M.T."/>
            <person name="Eldred J."/>
            <person name="Williams D."/>
            <person name="Bedell J.A."/>
            <person name="Mardis E.R."/>
            <person name="Clifton S.W."/>
            <person name="Chissoe S.L."/>
            <person name="Marra M.A."/>
            <person name="Raymond C."/>
            <person name="Haugen E."/>
            <person name="Gillett W."/>
            <person name="Zhou Y."/>
            <person name="James R."/>
            <person name="Phelps K."/>
            <person name="Iadanoto S."/>
            <person name="Bubb K."/>
            <person name="Simms E."/>
            <person name="Levy R."/>
            <person name="Clendenning J."/>
            <person name="Kaul R."/>
            <person name="Kent W.J."/>
            <person name="Furey T.S."/>
            <person name="Baertsch R.A."/>
            <person name="Brent M.R."/>
            <person name="Keibler E."/>
            <person name="Flicek P."/>
            <person name="Bork P."/>
            <person name="Suyama M."/>
            <person name="Bailey J.A."/>
            <person name="Portnoy M.E."/>
            <person name="Torrents D."/>
            <person name="Chinwalla A.T."/>
            <person name="Gish W.R."/>
            <person name="Eddy S.R."/>
            <person name="McPherson J.D."/>
            <person name="Olson M.V."/>
            <person name="Eichler E.E."/>
            <person name="Green E.D."/>
            <person name="Waterston R.H."/>
            <person name="Wilson R.K."/>
        </authorList>
    </citation>
    <scope>NUCLEOTIDE SEQUENCE [LARGE SCALE GENOMIC DNA]</scope>
</reference>
<reference key="3">
    <citation type="submission" date="2005-07" db="EMBL/GenBank/DDBJ databases">
        <authorList>
            <person name="Mural R.J."/>
            <person name="Istrail S."/>
            <person name="Sutton G."/>
            <person name="Florea L."/>
            <person name="Halpern A.L."/>
            <person name="Mobarry C.M."/>
            <person name="Lippert R."/>
            <person name="Walenz B."/>
            <person name="Shatkay H."/>
            <person name="Dew I."/>
            <person name="Miller J.R."/>
            <person name="Flanigan M.J."/>
            <person name="Edwards N.J."/>
            <person name="Bolanos R."/>
            <person name="Fasulo D."/>
            <person name="Halldorsson B.V."/>
            <person name="Hannenhalli S."/>
            <person name="Turner R."/>
            <person name="Yooseph S."/>
            <person name="Lu F."/>
            <person name="Nusskern D.R."/>
            <person name="Shue B.C."/>
            <person name="Zheng X.H."/>
            <person name="Zhong F."/>
            <person name="Delcher A.L."/>
            <person name="Huson D.H."/>
            <person name="Kravitz S.A."/>
            <person name="Mouchard L."/>
            <person name="Reinert K."/>
            <person name="Remington K.A."/>
            <person name="Clark A.G."/>
            <person name="Waterman M.S."/>
            <person name="Eichler E.E."/>
            <person name="Adams M.D."/>
            <person name="Hunkapiller M.W."/>
            <person name="Myers E.W."/>
            <person name="Venter J.C."/>
        </authorList>
    </citation>
    <scope>NUCLEOTIDE SEQUENCE [LARGE SCALE GENOMIC DNA]</scope>
</reference>
<reference key="4">
    <citation type="journal article" date="2004" name="Genome Res.">
        <title>The status, quality, and expansion of the NIH full-length cDNA project: the Mammalian Gene Collection (MGC).</title>
        <authorList>
            <consortium name="The MGC Project Team"/>
        </authorList>
    </citation>
    <scope>NUCLEOTIDE SEQUENCE [LARGE SCALE MRNA] (ISOFORMS 1; 2 AND 3)</scope>
    <source>
        <tissue>Brain</tissue>
        <tissue>Retinoblastoma</tissue>
    </source>
</reference>
<reference key="5">
    <citation type="journal article" date="2012" name="Biochem. J.">
        <title>Identification of the topology and functional domains of PAQR10.</title>
        <authorList>
            <person name="Jin T."/>
            <person name="Xu D."/>
            <person name="Ding Q."/>
            <person name="Zhang Y."/>
            <person name="Mao C."/>
            <person name="Pan Y."/>
            <person name="Wang Z."/>
            <person name="Chen Y."/>
        </authorList>
    </citation>
    <scope>SUBCELLULAR LOCATION</scope>
    <scope>MEMBRANE TOPOLOGY</scope>
</reference>
<organism>
    <name type="scientific">Homo sapiens</name>
    <name type="common">Human</name>
    <dbReference type="NCBI Taxonomy" id="9606"/>
    <lineage>
        <taxon>Eukaryota</taxon>
        <taxon>Metazoa</taxon>
        <taxon>Chordata</taxon>
        <taxon>Craniata</taxon>
        <taxon>Vertebrata</taxon>
        <taxon>Euteleostomi</taxon>
        <taxon>Mammalia</taxon>
        <taxon>Eutheria</taxon>
        <taxon>Euarchontoglires</taxon>
        <taxon>Primates</taxon>
        <taxon>Haplorrhini</taxon>
        <taxon>Catarrhini</taxon>
        <taxon>Hominidae</taxon>
        <taxon>Homo</taxon>
    </lineage>
</organism>
<accession>Q8IY49</accession>
<accession>B5MBW4</accession>
<accession>Q6NVU5</accession>
<accession>Q6TCH0</accession>
<gene>
    <name evidence="7" type="primary">MMD2</name>
    <name evidence="5" type="synonym">PAQR10</name>
</gene>
<dbReference type="EMBL" id="AY424288">
    <property type="protein sequence ID" value="AAR08376.1"/>
    <property type="molecule type" value="mRNA"/>
</dbReference>
<dbReference type="EMBL" id="AC053546">
    <property type="status" value="NOT_ANNOTATED_CDS"/>
    <property type="molecule type" value="Genomic_DNA"/>
</dbReference>
<dbReference type="EMBL" id="AC092032">
    <property type="status" value="NOT_ANNOTATED_CDS"/>
    <property type="molecule type" value="Genomic_DNA"/>
</dbReference>
<dbReference type="EMBL" id="CH471144">
    <property type="protein sequence ID" value="EAW87307.1"/>
    <property type="molecule type" value="Genomic_DNA"/>
</dbReference>
<dbReference type="EMBL" id="BC037881">
    <property type="protein sequence ID" value="AAH37881.2"/>
    <property type="molecule type" value="mRNA"/>
</dbReference>
<dbReference type="EMBL" id="BC048346">
    <property type="status" value="NOT_ANNOTATED_CDS"/>
    <property type="molecule type" value="mRNA"/>
</dbReference>
<dbReference type="EMBL" id="BC067905">
    <property type="protein sequence ID" value="AAH67905.1"/>
    <property type="molecule type" value="mRNA"/>
</dbReference>
<dbReference type="CCDS" id="CCDS47529.1">
    <molecule id="Q8IY49-1"/>
</dbReference>
<dbReference type="CCDS" id="CCDS47530.1">
    <molecule id="Q8IY49-2"/>
</dbReference>
<dbReference type="CCDS" id="CCDS59047.1">
    <molecule id="Q8IY49-3"/>
</dbReference>
<dbReference type="RefSeq" id="NP_001094070.1">
    <molecule id="Q8IY49-1"/>
    <property type="nucleotide sequence ID" value="NM_001100600.2"/>
</dbReference>
<dbReference type="RefSeq" id="NP_001257304.1">
    <molecule id="Q8IY49-3"/>
    <property type="nucleotide sequence ID" value="NM_001270375.2"/>
</dbReference>
<dbReference type="RefSeq" id="NP_940685.3">
    <molecule id="Q8IY49-2"/>
    <property type="nucleotide sequence ID" value="NM_198403.3"/>
</dbReference>
<dbReference type="SMR" id="Q8IY49"/>
<dbReference type="BioGRID" id="128770">
    <property type="interactions" value="8"/>
</dbReference>
<dbReference type="FunCoup" id="Q8IY49">
    <property type="interactions" value="14"/>
</dbReference>
<dbReference type="IntAct" id="Q8IY49">
    <property type="interactions" value="7"/>
</dbReference>
<dbReference type="STRING" id="9606.ENSP00000384690"/>
<dbReference type="TCDB" id="1.C.113.2.3">
    <property type="family name" value="the hemolysin iii (hly iii) family"/>
</dbReference>
<dbReference type="PhosphoSitePlus" id="Q8IY49"/>
<dbReference type="BioMuta" id="MMD2"/>
<dbReference type="DMDM" id="51701810"/>
<dbReference type="jPOST" id="Q8IY49"/>
<dbReference type="PaxDb" id="9606-ENSP00000384690"/>
<dbReference type="ProteomicsDB" id="5944"/>
<dbReference type="ProteomicsDB" id="71107">
    <molecule id="Q8IY49-1"/>
</dbReference>
<dbReference type="ProteomicsDB" id="71108">
    <molecule id="Q8IY49-2"/>
</dbReference>
<dbReference type="Antibodypedia" id="24544">
    <property type="antibodies" value="113 antibodies from 19 providers"/>
</dbReference>
<dbReference type="DNASU" id="221938"/>
<dbReference type="Ensembl" id="ENST00000401401.8">
    <molecule id="Q8IY49-2"/>
    <property type="protein sequence ID" value="ENSP00000384141.3"/>
    <property type="gene ID" value="ENSG00000136297.16"/>
</dbReference>
<dbReference type="Ensembl" id="ENST00000404774.7">
    <molecule id="Q8IY49-1"/>
    <property type="protein sequence ID" value="ENSP00000384690.3"/>
    <property type="gene ID" value="ENSG00000136297.16"/>
</dbReference>
<dbReference type="Ensembl" id="ENST00000406755.5">
    <molecule id="Q8IY49-3"/>
    <property type="protein sequence ID" value="ENSP00000385963.1"/>
    <property type="gene ID" value="ENSG00000136297.16"/>
</dbReference>
<dbReference type="GeneID" id="221938"/>
<dbReference type="KEGG" id="hsa:221938"/>
<dbReference type="MANE-Select" id="ENST00000401401.8">
    <molecule id="Q8IY49-2"/>
    <property type="protein sequence ID" value="ENSP00000384141.3"/>
    <property type="RefSeq nucleotide sequence ID" value="NM_198403.4"/>
    <property type="RefSeq protein sequence ID" value="NP_940685.3"/>
</dbReference>
<dbReference type="UCSC" id="uc003snn.5">
    <molecule id="Q8IY49-1"/>
    <property type="organism name" value="human"/>
</dbReference>
<dbReference type="AGR" id="HGNC:30133"/>
<dbReference type="CTD" id="221938"/>
<dbReference type="DisGeNET" id="221938"/>
<dbReference type="GeneCards" id="MMD2"/>
<dbReference type="HGNC" id="HGNC:30133">
    <property type="gene designation" value="MMD2"/>
</dbReference>
<dbReference type="HPA" id="ENSG00000136297">
    <property type="expression patterns" value="Tissue enhanced (brain, retina, testis)"/>
</dbReference>
<dbReference type="MalaCards" id="MMD2"/>
<dbReference type="MIM" id="614581">
    <property type="type" value="gene"/>
</dbReference>
<dbReference type="neXtProt" id="NX_Q8IY49"/>
<dbReference type="OpenTargets" id="ENSG00000136297"/>
<dbReference type="PharmGKB" id="PA134910250"/>
<dbReference type="VEuPathDB" id="HostDB:ENSG00000136297"/>
<dbReference type="eggNOG" id="KOG4243">
    <property type="taxonomic scope" value="Eukaryota"/>
</dbReference>
<dbReference type="GeneTree" id="ENSGT00940000157972"/>
<dbReference type="HOGENOM" id="CLU_051078_0_0_1"/>
<dbReference type="InParanoid" id="Q8IY49"/>
<dbReference type="OMA" id="HEVFHAM"/>
<dbReference type="OrthoDB" id="186812at2759"/>
<dbReference type="PAN-GO" id="Q8IY49">
    <property type="GO annotations" value="0 GO annotations based on evolutionary models"/>
</dbReference>
<dbReference type="PhylomeDB" id="Q8IY49"/>
<dbReference type="TreeFam" id="TF313370"/>
<dbReference type="PathwayCommons" id="Q8IY49"/>
<dbReference type="SignaLink" id="Q8IY49"/>
<dbReference type="BioGRID-ORCS" id="221938">
    <property type="hits" value="14 hits in 1125 CRISPR screens"/>
</dbReference>
<dbReference type="ChiTaRS" id="MMD2">
    <property type="organism name" value="human"/>
</dbReference>
<dbReference type="GenomeRNAi" id="221938"/>
<dbReference type="Pharos" id="Q8IY49">
    <property type="development level" value="Tbio"/>
</dbReference>
<dbReference type="PRO" id="PR:Q8IY49"/>
<dbReference type="Proteomes" id="UP000005640">
    <property type="component" value="Chromosome 7"/>
</dbReference>
<dbReference type="RNAct" id="Q8IY49">
    <property type="molecule type" value="protein"/>
</dbReference>
<dbReference type="Bgee" id="ENSG00000136297">
    <property type="expression patterns" value="Expressed in C1 segment of cervical spinal cord and 71 other cell types or tissues"/>
</dbReference>
<dbReference type="GO" id="GO:0000139">
    <property type="term" value="C:Golgi membrane"/>
    <property type="evidence" value="ECO:0000314"/>
    <property type="project" value="UniProtKB"/>
</dbReference>
<dbReference type="GO" id="GO:0048471">
    <property type="term" value="C:perinuclear region of cytoplasm"/>
    <property type="evidence" value="ECO:0000314"/>
    <property type="project" value="MGI"/>
</dbReference>
<dbReference type="GO" id="GO:0004672">
    <property type="term" value="F:protein kinase activity"/>
    <property type="evidence" value="ECO:0000314"/>
    <property type="project" value="CACAO"/>
</dbReference>
<dbReference type="GO" id="GO:0045666">
    <property type="term" value="P:positive regulation of neuron differentiation"/>
    <property type="evidence" value="ECO:0000314"/>
    <property type="project" value="CACAO"/>
</dbReference>
<dbReference type="GO" id="GO:0045860">
    <property type="term" value="P:positive regulation of protein kinase activity"/>
    <property type="evidence" value="ECO:0000314"/>
    <property type="project" value="CACAO"/>
</dbReference>
<dbReference type="GO" id="GO:0046579">
    <property type="term" value="P:positive regulation of Ras protein signal transduction"/>
    <property type="evidence" value="ECO:0000314"/>
    <property type="project" value="CACAO"/>
</dbReference>
<dbReference type="GO" id="GO:0032880">
    <property type="term" value="P:regulation of protein localization"/>
    <property type="evidence" value="ECO:0000314"/>
    <property type="project" value="CACAO"/>
</dbReference>
<dbReference type="InterPro" id="IPR004254">
    <property type="entry name" value="AdipoR/HlyIII-related"/>
</dbReference>
<dbReference type="PANTHER" id="PTHR20855">
    <property type="entry name" value="ADIPOR/PROGESTIN RECEPTOR-RELATED"/>
    <property type="match status" value="1"/>
</dbReference>
<dbReference type="PANTHER" id="PTHR20855:SF107">
    <property type="entry name" value="MONOCYTE TO MACROPHAGE DIFFERENTIATION FACTOR 2"/>
    <property type="match status" value="1"/>
</dbReference>
<dbReference type="Pfam" id="PF03006">
    <property type="entry name" value="HlyIII"/>
    <property type="match status" value="1"/>
</dbReference>
<name>PAQRA_HUMAN</name>
<evidence type="ECO:0000255" key="1"/>
<evidence type="ECO:0000269" key="2">
    <source>
    </source>
</evidence>
<evidence type="ECO:0000269" key="3">
    <source>
    </source>
</evidence>
<evidence type="ECO:0000303" key="4">
    <source>
    </source>
</evidence>
<evidence type="ECO:0000303" key="5">
    <source>
    </source>
</evidence>
<evidence type="ECO:0000305" key="6"/>
<evidence type="ECO:0000312" key="7">
    <source>
        <dbReference type="HGNC" id="HGNC:30133"/>
    </source>
</evidence>
<proteinExistence type="evidence at protein level"/>
<comment type="interaction">
    <interactant intactId="EBI-13349813">
        <id>Q8IY49-2</id>
    </interactant>
    <interactant intactId="EBI-12808270">
        <id>P07307-3</id>
        <label>ASGR2</label>
    </interactant>
    <organismsDiffer>false</organismsDiffer>
    <experiments>3</experiments>
</comment>
<comment type="interaction">
    <interactant intactId="EBI-13349813">
        <id>Q8IY49-2</id>
    </interactant>
    <interactant intactId="EBI-7797864">
        <id>P11912</id>
        <label>CD79A</label>
    </interactant>
    <organismsDiffer>false</organismsDiffer>
    <experiments>3</experiments>
</comment>
<comment type="interaction">
    <interactant intactId="EBI-13349813">
        <id>Q8IY49-2</id>
    </interactant>
    <interactant intactId="EBI-6942903">
        <id>Q96BA8</id>
        <label>CREB3L1</label>
    </interactant>
    <organismsDiffer>false</organismsDiffer>
    <experiments>3</experiments>
</comment>
<comment type="interaction">
    <interactant intactId="EBI-13349813">
        <id>Q8IY49-2</id>
    </interactant>
    <interactant intactId="EBI-18304435">
        <id>Q5JX71</id>
        <label>FAM209A</label>
    </interactant>
    <organismsDiffer>false</organismsDiffer>
    <experiments>3</experiments>
</comment>
<comment type="interaction">
    <interactant intactId="EBI-13349813">
        <id>Q8IY49-2</id>
    </interactant>
    <interactant intactId="EBI-1046170">
        <id>O95470</id>
        <label>SGPL1</label>
    </interactant>
    <organismsDiffer>false</organismsDiffer>
    <experiments>3</experiments>
</comment>
<comment type="interaction">
    <interactant intactId="EBI-13349813">
        <id>Q8IY49-2</id>
    </interactant>
    <interactant intactId="EBI-17280858">
        <id>Q8WWF3</id>
        <label>SSMEM1</label>
    </interactant>
    <organismsDiffer>false</organismsDiffer>
    <experiments>3</experiments>
</comment>
<comment type="interaction">
    <interactant intactId="EBI-13349813">
        <id>Q8IY49-2</id>
    </interactant>
    <interactant intactId="EBI-8638294">
        <id>Q9NUH8</id>
        <label>TMEM14B</label>
    </interactant>
    <organismsDiffer>false</organismsDiffer>
    <experiments>3</experiments>
</comment>
<comment type="subcellular location">
    <subcellularLocation>
        <location evidence="3">Golgi apparatus membrane</location>
        <topology evidence="3">Multi-pass membrane protein</topology>
    </subcellularLocation>
</comment>
<comment type="alternative products">
    <event type="alternative splicing"/>
    <isoform>
        <id>Q8IY49-1</id>
        <name>1</name>
        <sequence type="displayed"/>
    </isoform>
    <isoform>
        <id>Q8IY49-2</id>
        <name>2</name>
        <sequence type="described" ref="VSP_011486"/>
    </isoform>
    <isoform>
        <id>Q8IY49-3</id>
        <name>3</name>
        <sequence type="described" ref="VSP_011486 VSP_045589"/>
    </isoform>
</comment>
<comment type="tissue specificity">
    <text evidence="2">Shows restricted expression with highest levels in brain and testis.</text>
</comment>
<comment type="similarity">
    <text evidence="6">Belongs to the ADIPOR family.</text>
</comment>
<feature type="chain" id="PRO_0000218857" description="Monocyte to macrophage differentiation factor 2">
    <location>
        <begin position="1"/>
        <end position="270"/>
    </location>
</feature>
<feature type="topological domain" description="Cytoplasmic" evidence="1">
    <location>
        <begin position="1"/>
        <end position="38"/>
    </location>
</feature>
<feature type="transmembrane region" description="Helical" evidence="1">
    <location>
        <begin position="39"/>
        <end position="59"/>
    </location>
</feature>
<feature type="topological domain" description="Lumenal" evidence="1">
    <location>
        <begin position="60"/>
        <end position="65"/>
    </location>
</feature>
<feature type="transmembrane region" description="Helical" evidence="1">
    <location>
        <begin position="66"/>
        <end position="86"/>
    </location>
</feature>
<feature type="topological domain" description="Cytoplasmic" evidence="1">
    <location>
        <begin position="87"/>
        <end position="102"/>
    </location>
</feature>
<feature type="transmembrane region" description="Helical" evidence="1">
    <location>
        <begin position="103"/>
        <end position="123"/>
    </location>
</feature>
<feature type="topological domain" description="Lumenal" evidence="1">
    <location>
        <begin position="124"/>
        <end position="132"/>
    </location>
</feature>
<feature type="transmembrane region" description="Helical" evidence="1">
    <location>
        <begin position="133"/>
        <end position="153"/>
    </location>
</feature>
<feature type="topological domain" description="Cytoplasmic" evidence="1">
    <location>
        <begin position="154"/>
        <end position="182"/>
    </location>
</feature>
<feature type="transmembrane region" description="Helical" evidence="1">
    <location>
        <begin position="183"/>
        <end position="203"/>
    </location>
</feature>
<feature type="topological domain" description="Lumenal" evidence="1">
    <location>
        <begin position="204"/>
        <end position="205"/>
    </location>
</feature>
<feature type="transmembrane region" description="Helical" evidence="1">
    <location>
        <begin position="206"/>
        <end position="226"/>
    </location>
</feature>
<feature type="topological domain" description="Cytoplasmic" evidence="1">
    <location>
        <begin position="227"/>
        <end position="233"/>
    </location>
</feature>
<feature type="transmembrane region" description="Helical" evidence="1">
    <location>
        <begin position="234"/>
        <end position="254"/>
    </location>
</feature>
<feature type="topological domain" description="Lumenal" evidence="1">
    <location>
        <begin position="255"/>
        <end position="270"/>
    </location>
</feature>
<feature type="splice variant" id="VSP_011486" description="In isoform 2 and isoform 3." evidence="4 5">
    <location>
        <begin position="156"/>
        <end position="179"/>
    </location>
</feature>
<feature type="splice variant" id="VSP_045589" description="In isoform 3." evidence="4">
    <original>PNTEGIWELVTGGVFYCLGMVFFKSDGRIPFAHAIWHLFVAFGAGTHYYAIWRYLYLPSTLQTKVSK</original>
    <variation>AGKLRPGMTCLKRQ</variation>
    <location>
        <begin position="204"/>
        <end position="270"/>
    </location>
</feature>
<feature type="sequence conflict" description="In Ref. 1; AAR08376." evidence="6" ref="1">
    <original>F</original>
    <variation>L</variation>
    <location>
        <position position="9"/>
    </location>
</feature>
<feature type="sequence conflict" description="In Ref. 4; AAH37881." evidence="6" ref="4">
    <original>V</original>
    <variation>L</variation>
    <location>
        <position position="99"/>
    </location>
</feature>
<feature type="sequence conflict" description="In Ref. 4; AAH67905." evidence="6" ref="4">
    <original>L</original>
    <variation>I</variation>
    <location>
        <position position="103"/>
    </location>
</feature>
<keyword id="KW-0025">Alternative splicing</keyword>
<keyword id="KW-0333">Golgi apparatus</keyword>
<keyword id="KW-0472">Membrane</keyword>
<keyword id="KW-0675">Receptor</keyword>
<keyword id="KW-1185">Reference proteome</keyword>
<keyword id="KW-0812">Transmembrane</keyword>
<keyword id="KW-1133">Transmembrane helix</keyword>
<sequence>MFAPRLLDFQKTKYARFMNHRVPAHKRYQPTEYEHAANCATHAFWIIPSILGSSNLYFLSDDDWETISAWIYGLGLCGLFVVSTVFHTISWKKSHLRMVEHCLHMFDRMVIYFFIAASYAPWLNLRELGPWASHMRWLVWIMASVGTIYVFFFHERTGSCVQFLRGEACPKAGTACLPARYKLVELLCYVVMGFFPALVILSMPNTEGIWELVTGGVFYCLGMVFFKSDGRIPFAHAIWHLFVAFGAGTHYYAIWRYLYLPSTLQTKVSK</sequence>
<protein>
    <recommendedName>
        <fullName>Monocyte to macrophage differentiation factor 2</fullName>
    </recommendedName>
    <alternativeName>
        <fullName evidence="5">Progestin and adipoQ receptor family member 10</fullName>
    </alternativeName>
    <alternativeName>
        <fullName>Progestin and adipoQ receptor family member X</fullName>
    </alternativeName>
</protein>